<feature type="chain" id="PRO_0000223598" description="Nuclear hormone receptor family member nhr-154">
    <location>
        <begin position="1"/>
        <end position="469"/>
    </location>
</feature>
<feature type="domain" description="NR LBD" evidence="3">
    <location>
        <begin position="230"/>
        <end position="459"/>
    </location>
</feature>
<feature type="DNA-binding region" description="Nuclear receptor" evidence="2">
    <location>
        <begin position="80"/>
        <end position="159"/>
    </location>
</feature>
<feature type="zinc finger region" description="NR C4-type" evidence="2">
    <location>
        <begin position="83"/>
        <end position="103"/>
    </location>
</feature>
<feature type="zinc finger region" description="NR C4-type" evidence="2">
    <location>
        <begin position="119"/>
        <end position="142"/>
    </location>
</feature>
<sequence>MTTFEEFESPSTSFNFQTFDRYQPDFKMIDYSHQQATHEYHLPDQEVFQNQNEFSASPPDISSPFADEKIYKSLPRNKCPSKCLVCRNPAIGYHYDVPSCNGCKTFFRRTIITGRKFTCAKQKKCMDGTEPVDMSKRLCRACRFAKCVEVGMNPMAIQAEVKTDEGKVLRSEVLNQRESLGVVSSLIVTEEDLLSRMIEKLTFVESKVEPLHRSGMPPGYRDIRKLEEILDSKPVLVVTDIPNLKFCPSPCANEKRPRRHFTNYVHTSYLASLESSKMFEFSSQLDLESRILLMKHATLICSNMMNAFFSINEMKSDILRHPDGSMSGHMRKFDRENDVMTDHVKLIQKTLITFLNHKVDKIEYLLFKAIMLCNPAVPGLDSWNQEIIEKERNQYVKALLNYCLLQHGKLQGPTRFATILAMAPIIENQSKNQKDFHVYIKAKHFQKHKKMGTTFRKCISCMFDQIMET</sequence>
<dbReference type="EMBL" id="Z92825">
    <property type="protein sequence ID" value="CAB07316.2"/>
    <property type="molecule type" value="Genomic_DNA"/>
</dbReference>
<dbReference type="EMBL" id="Z75955">
    <property type="protein sequence ID" value="CAB07316.2"/>
    <property type="status" value="JOINED"/>
    <property type="molecule type" value="Genomic_DNA"/>
</dbReference>
<dbReference type="PIR" id="T19238">
    <property type="entry name" value="T19238"/>
</dbReference>
<dbReference type="RefSeq" id="NP_506037.2">
    <property type="nucleotide sequence ID" value="NM_073636.5"/>
</dbReference>
<dbReference type="SMR" id="O01931"/>
<dbReference type="FunCoup" id="O01931">
    <property type="interactions" value="201"/>
</dbReference>
<dbReference type="PaxDb" id="6239-C13C4.2"/>
<dbReference type="EnsemblMetazoa" id="C13C4.2.1">
    <property type="protein sequence ID" value="C13C4.2.1"/>
    <property type="gene ID" value="WBGene00007547"/>
</dbReference>
<dbReference type="GeneID" id="182565"/>
<dbReference type="KEGG" id="cel:CELE_C13C4.2"/>
<dbReference type="UCSC" id="C13C4.2">
    <property type="organism name" value="c. elegans"/>
</dbReference>
<dbReference type="AGR" id="WB:WBGene00007547"/>
<dbReference type="CTD" id="182565"/>
<dbReference type="WormBase" id="C13C4.2">
    <property type="protein sequence ID" value="CE40299"/>
    <property type="gene ID" value="WBGene00007547"/>
    <property type="gene designation" value="nhr-154"/>
</dbReference>
<dbReference type="eggNOG" id="ENOG502R0VT">
    <property type="taxonomic scope" value="Eukaryota"/>
</dbReference>
<dbReference type="GeneTree" id="ENSGT00970000195934"/>
<dbReference type="HOGENOM" id="CLU_007368_3_1_1"/>
<dbReference type="InParanoid" id="O01931"/>
<dbReference type="OMA" id="MMNAFFS"/>
<dbReference type="OrthoDB" id="9984314at2759"/>
<dbReference type="PhylomeDB" id="O01931"/>
<dbReference type="Reactome" id="R-CEL-383280">
    <property type="pathway name" value="Nuclear Receptor transcription pathway"/>
</dbReference>
<dbReference type="Reactome" id="R-CEL-5362517">
    <property type="pathway name" value="Signaling by Retinoic Acid"/>
</dbReference>
<dbReference type="PRO" id="PR:O01931"/>
<dbReference type="Proteomes" id="UP000001940">
    <property type="component" value="Chromosome V"/>
</dbReference>
<dbReference type="Bgee" id="WBGene00007547">
    <property type="expression patterns" value="Expressed in pharyngeal muscle cell (C elegans) and 3 other cell types or tissues"/>
</dbReference>
<dbReference type="GO" id="GO:0005634">
    <property type="term" value="C:nucleus"/>
    <property type="evidence" value="ECO:0007669"/>
    <property type="project" value="UniProtKB-SubCell"/>
</dbReference>
<dbReference type="GO" id="GO:0004879">
    <property type="term" value="F:nuclear receptor activity"/>
    <property type="evidence" value="ECO:0000318"/>
    <property type="project" value="GO_Central"/>
</dbReference>
<dbReference type="GO" id="GO:0000978">
    <property type="term" value="F:RNA polymerase II cis-regulatory region sequence-specific DNA binding"/>
    <property type="evidence" value="ECO:0000318"/>
    <property type="project" value="GO_Central"/>
</dbReference>
<dbReference type="GO" id="GO:0008270">
    <property type="term" value="F:zinc ion binding"/>
    <property type="evidence" value="ECO:0007669"/>
    <property type="project" value="UniProtKB-KW"/>
</dbReference>
<dbReference type="GO" id="GO:0030154">
    <property type="term" value="P:cell differentiation"/>
    <property type="evidence" value="ECO:0000318"/>
    <property type="project" value="GO_Central"/>
</dbReference>
<dbReference type="GO" id="GO:0006357">
    <property type="term" value="P:regulation of transcription by RNA polymerase II"/>
    <property type="evidence" value="ECO:0000318"/>
    <property type="project" value="GO_Central"/>
</dbReference>
<dbReference type="GO" id="GO:0042594">
    <property type="term" value="P:response to starvation"/>
    <property type="evidence" value="ECO:0000270"/>
    <property type="project" value="WormBase"/>
</dbReference>
<dbReference type="CDD" id="cd06960">
    <property type="entry name" value="NR_DBD_HNF4A"/>
    <property type="match status" value="1"/>
</dbReference>
<dbReference type="FunFam" id="1.10.565.10:FF:000054">
    <property type="entry name" value="Nuclear Hormone Receptor family"/>
    <property type="match status" value="1"/>
</dbReference>
<dbReference type="FunFam" id="3.30.50.10:FF:000050">
    <property type="entry name" value="Nuclear Hormone Receptor family"/>
    <property type="match status" value="1"/>
</dbReference>
<dbReference type="Gene3D" id="3.30.50.10">
    <property type="entry name" value="Erythroid Transcription Factor GATA-1, subunit A"/>
    <property type="match status" value="1"/>
</dbReference>
<dbReference type="Gene3D" id="1.10.565.10">
    <property type="entry name" value="Retinoid X Receptor"/>
    <property type="match status" value="1"/>
</dbReference>
<dbReference type="InterPro" id="IPR049636">
    <property type="entry name" value="HNF4-like_DBD"/>
</dbReference>
<dbReference type="InterPro" id="IPR035500">
    <property type="entry name" value="NHR-like_dom_sf"/>
</dbReference>
<dbReference type="InterPro" id="IPR000536">
    <property type="entry name" value="Nucl_hrmn_rcpt_lig-bd"/>
</dbReference>
<dbReference type="InterPro" id="IPR050274">
    <property type="entry name" value="Nuclear_hormone_rcpt_NR2"/>
</dbReference>
<dbReference type="InterPro" id="IPR001628">
    <property type="entry name" value="Znf_hrmn_rcpt"/>
</dbReference>
<dbReference type="InterPro" id="IPR013088">
    <property type="entry name" value="Znf_NHR/GATA"/>
</dbReference>
<dbReference type="PANTHER" id="PTHR24083">
    <property type="entry name" value="NUCLEAR HORMONE RECEPTOR"/>
    <property type="match status" value="1"/>
</dbReference>
<dbReference type="Pfam" id="PF00104">
    <property type="entry name" value="Hormone_recep"/>
    <property type="match status" value="1"/>
</dbReference>
<dbReference type="Pfam" id="PF00105">
    <property type="entry name" value="zf-C4"/>
    <property type="match status" value="1"/>
</dbReference>
<dbReference type="PRINTS" id="PR00047">
    <property type="entry name" value="STROIDFINGER"/>
</dbReference>
<dbReference type="SMART" id="SM00430">
    <property type="entry name" value="HOLI"/>
    <property type="match status" value="1"/>
</dbReference>
<dbReference type="SMART" id="SM00399">
    <property type="entry name" value="ZnF_C4"/>
    <property type="match status" value="1"/>
</dbReference>
<dbReference type="SUPFAM" id="SSF57716">
    <property type="entry name" value="Glucocorticoid receptor-like (DNA-binding domain)"/>
    <property type="match status" value="1"/>
</dbReference>
<dbReference type="SUPFAM" id="SSF48508">
    <property type="entry name" value="Nuclear receptor ligand-binding domain"/>
    <property type="match status" value="1"/>
</dbReference>
<dbReference type="PROSITE" id="PS51843">
    <property type="entry name" value="NR_LBD"/>
    <property type="match status" value="1"/>
</dbReference>
<dbReference type="PROSITE" id="PS00031">
    <property type="entry name" value="NUCLEAR_REC_DBD_1"/>
    <property type="match status" value="1"/>
</dbReference>
<dbReference type="PROSITE" id="PS51030">
    <property type="entry name" value="NUCLEAR_REC_DBD_2"/>
    <property type="match status" value="1"/>
</dbReference>
<comment type="function">
    <text evidence="1">Orphan nuclear receptor.</text>
</comment>
<comment type="subcellular location">
    <subcellularLocation>
        <location evidence="2">Nucleus</location>
    </subcellularLocation>
</comment>
<comment type="similarity">
    <text evidence="4">Belongs to the nuclear hormone receptor family.</text>
</comment>
<proteinExistence type="inferred from homology"/>
<keyword id="KW-0238">DNA-binding</keyword>
<keyword id="KW-0479">Metal-binding</keyword>
<keyword id="KW-0539">Nucleus</keyword>
<keyword id="KW-0675">Receptor</keyword>
<keyword id="KW-1185">Reference proteome</keyword>
<keyword id="KW-0804">Transcription</keyword>
<keyword id="KW-0805">Transcription regulation</keyword>
<keyword id="KW-0862">Zinc</keyword>
<keyword id="KW-0863">Zinc-finger</keyword>
<organism>
    <name type="scientific">Caenorhabditis elegans</name>
    <dbReference type="NCBI Taxonomy" id="6239"/>
    <lineage>
        <taxon>Eukaryota</taxon>
        <taxon>Metazoa</taxon>
        <taxon>Ecdysozoa</taxon>
        <taxon>Nematoda</taxon>
        <taxon>Chromadorea</taxon>
        <taxon>Rhabditida</taxon>
        <taxon>Rhabditina</taxon>
        <taxon>Rhabditomorpha</taxon>
        <taxon>Rhabditoidea</taxon>
        <taxon>Rhabditidae</taxon>
        <taxon>Peloderinae</taxon>
        <taxon>Caenorhabditis</taxon>
    </lineage>
</organism>
<evidence type="ECO:0000250" key="1"/>
<evidence type="ECO:0000255" key="2">
    <source>
        <dbReference type="PROSITE-ProRule" id="PRU00407"/>
    </source>
</evidence>
<evidence type="ECO:0000255" key="3">
    <source>
        <dbReference type="PROSITE-ProRule" id="PRU01189"/>
    </source>
</evidence>
<evidence type="ECO:0000305" key="4"/>
<protein>
    <recommendedName>
        <fullName>Nuclear hormone receptor family member nhr-154</fullName>
    </recommendedName>
</protein>
<gene>
    <name type="primary">nhr-154</name>
    <name type="ORF">C13C4.2</name>
</gene>
<reference key="1">
    <citation type="journal article" date="1998" name="Science">
        <title>Genome sequence of the nematode C. elegans: a platform for investigating biology.</title>
        <authorList>
            <consortium name="The C. elegans sequencing consortium"/>
        </authorList>
    </citation>
    <scope>NUCLEOTIDE SEQUENCE [LARGE SCALE GENOMIC DNA]</scope>
    <source>
        <strain>Bristol N2</strain>
    </source>
</reference>
<accession>O01931</accession>
<accession>O02284</accession>
<name>NH154_CAEEL</name>